<dbReference type="EC" id="3.4.24.-" evidence="1"/>
<dbReference type="EMBL" id="CP001685">
    <property type="protein sequence ID" value="ACV38645.1"/>
    <property type="molecule type" value="Genomic_DNA"/>
</dbReference>
<dbReference type="RefSeq" id="WP_015768993.1">
    <property type="nucleotide sequence ID" value="NC_013192.1"/>
</dbReference>
<dbReference type="SMR" id="C7N914"/>
<dbReference type="STRING" id="523794.Lebu_0737"/>
<dbReference type="KEGG" id="lba:Lebu_0737"/>
<dbReference type="eggNOG" id="COG0465">
    <property type="taxonomic scope" value="Bacteria"/>
</dbReference>
<dbReference type="HOGENOM" id="CLU_000688_16_2_0"/>
<dbReference type="OrthoDB" id="9809379at2"/>
<dbReference type="Proteomes" id="UP000001910">
    <property type="component" value="Chromosome"/>
</dbReference>
<dbReference type="GO" id="GO:0005886">
    <property type="term" value="C:plasma membrane"/>
    <property type="evidence" value="ECO:0007669"/>
    <property type="project" value="UniProtKB-SubCell"/>
</dbReference>
<dbReference type="GO" id="GO:0005524">
    <property type="term" value="F:ATP binding"/>
    <property type="evidence" value="ECO:0007669"/>
    <property type="project" value="UniProtKB-UniRule"/>
</dbReference>
<dbReference type="GO" id="GO:0016887">
    <property type="term" value="F:ATP hydrolysis activity"/>
    <property type="evidence" value="ECO:0007669"/>
    <property type="project" value="UniProtKB-UniRule"/>
</dbReference>
<dbReference type="GO" id="GO:0004176">
    <property type="term" value="F:ATP-dependent peptidase activity"/>
    <property type="evidence" value="ECO:0007669"/>
    <property type="project" value="InterPro"/>
</dbReference>
<dbReference type="GO" id="GO:0004222">
    <property type="term" value="F:metalloendopeptidase activity"/>
    <property type="evidence" value="ECO:0007669"/>
    <property type="project" value="InterPro"/>
</dbReference>
<dbReference type="GO" id="GO:0008270">
    <property type="term" value="F:zinc ion binding"/>
    <property type="evidence" value="ECO:0007669"/>
    <property type="project" value="UniProtKB-UniRule"/>
</dbReference>
<dbReference type="GO" id="GO:0030163">
    <property type="term" value="P:protein catabolic process"/>
    <property type="evidence" value="ECO:0007669"/>
    <property type="project" value="UniProtKB-UniRule"/>
</dbReference>
<dbReference type="GO" id="GO:0006508">
    <property type="term" value="P:proteolysis"/>
    <property type="evidence" value="ECO:0007669"/>
    <property type="project" value="UniProtKB-KW"/>
</dbReference>
<dbReference type="CDD" id="cd19501">
    <property type="entry name" value="RecA-like_FtsH"/>
    <property type="match status" value="1"/>
</dbReference>
<dbReference type="FunFam" id="1.10.8.60:FF:000001">
    <property type="entry name" value="ATP-dependent zinc metalloprotease FtsH"/>
    <property type="match status" value="1"/>
</dbReference>
<dbReference type="FunFam" id="1.20.58.760:FF:000001">
    <property type="entry name" value="ATP-dependent zinc metalloprotease FtsH"/>
    <property type="match status" value="1"/>
</dbReference>
<dbReference type="FunFam" id="3.40.50.300:FF:000001">
    <property type="entry name" value="ATP-dependent zinc metalloprotease FtsH"/>
    <property type="match status" value="1"/>
</dbReference>
<dbReference type="Gene3D" id="1.10.8.60">
    <property type="match status" value="1"/>
</dbReference>
<dbReference type="Gene3D" id="3.40.50.300">
    <property type="entry name" value="P-loop containing nucleotide triphosphate hydrolases"/>
    <property type="match status" value="1"/>
</dbReference>
<dbReference type="Gene3D" id="1.20.58.760">
    <property type="entry name" value="Peptidase M41"/>
    <property type="match status" value="1"/>
</dbReference>
<dbReference type="HAMAP" id="MF_01458">
    <property type="entry name" value="FtsH"/>
    <property type="match status" value="1"/>
</dbReference>
<dbReference type="InterPro" id="IPR003593">
    <property type="entry name" value="AAA+_ATPase"/>
</dbReference>
<dbReference type="InterPro" id="IPR041569">
    <property type="entry name" value="AAA_lid_3"/>
</dbReference>
<dbReference type="InterPro" id="IPR050928">
    <property type="entry name" value="ATP-dep_Zn_Metalloprotease"/>
</dbReference>
<dbReference type="InterPro" id="IPR003959">
    <property type="entry name" value="ATPase_AAA_core"/>
</dbReference>
<dbReference type="InterPro" id="IPR003960">
    <property type="entry name" value="ATPase_AAA_CS"/>
</dbReference>
<dbReference type="InterPro" id="IPR005936">
    <property type="entry name" value="FtsH"/>
</dbReference>
<dbReference type="InterPro" id="IPR027417">
    <property type="entry name" value="P-loop_NTPase"/>
</dbReference>
<dbReference type="InterPro" id="IPR011546">
    <property type="entry name" value="Pept_M41_FtsH_extracell"/>
</dbReference>
<dbReference type="InterPro" id="IPR000642">
    <property type="entry name" value="Peptidase_M41"/>
</dbReference>
<dbReference type="InterPro" id="IPR037219">
    <property type="entry name" value="Peptidase_M41-like"/>
</dbReference>
<dbReference type="NCBIfam" id="TIGR01241">
    <property type="entry name" value="FtsH_fam"/>
    <property type="match status" value="1"/>
</dbReference>
<dbReference type="PANTHER" id="PTHR43655:SF2">
    <property type="entry name" value="AFG3 LIKE MATRIX AAA PEPTIDASE SUBUNIT 2, ISOFORM A"/>
    <property type="match status" value="1"/>
</dbReference>
<dbReference type="PANTHER" id="PTHR43655">
    <property type="entry name" value="ATP-DEPENDENT PROTEASE"/>
    <property type="match status" value="1"/>
</dbReference>
<dbReference type="Pfam" id="PF00004">
    <property type="entry name" value="AAA"/>
    <property type="match status" value="1"/>
</dbReference>
<dbReference type="Pfam" id="PF17862">
    <property type="entry name" value="AAA_lid_3"/>
    <property type="match status" value="1"/>
</dbReference>
<dbReference type="Pfam" id="PF06480">
    <property type="entry name" value="FtsH_ext"/>
    <property type="match status" value="1"/>
</dbReference>
<dbReference type="Pfam" id="PF01434">
    <property type="entry name" value="Peptidase_M41"/>
    <property type="match status" value="1"/>
</dbReference>
<dbReference type="SMART" id="SM00382">
    <property type="entry name" value="AAA"/>
    <property type="match status" value="1"/>
</dbReference>
<dbReference type="SUPFAM" id="SSF140990">
    <property type="entry name" value="FtsH protease domain-like"/>
    <property type="match status" value="1"/>
</dbReference>
<dbReference type="SUPFAM" id="SSF52540">
    <property type="entry name" value="P-loop containing nucleoside triphosphate hydrolases"/>
    <property type="match status" value="1"/>
</dbReference>
<dbReference type="PROSITE" id="PS00674">
    <property type="entry name" value="AAA"/>
    <property type="match status" value="1"/>
</dbReference>
<sequence length="768" mass="85367">MADRDKNDIRKRLEELRKDNNRRNNRQDNGNRSPFSGFLFFIFVILLFTFTLLFHRDIQTYFQEKREISYTEFVSKTQKGDFSEINEKDDKLISQVKENGKDVLYYTKKITDRVGDEPNIISAIGQKKVKLNSLQPSGGGFFLLLLGQFLPMIIMIGLMVYLAKKMVGGSQGGGPGNIFGFGKSRVNKIDKKPDVKFDDVAGVDGAKEELREVVDFLKNPEKYTKAGARVPKGVLLLGRPGTGKTLLAKAVAGESGASFFSISGSEFVEMFVGVGASRVRDLFEKAKESSPSIIFIDEIDAIGRRRSVGKNSGSNDEREQTLNQLLVEMDGFETDTKVIVLAATNREDVLDPALLRAGRFDRRVTVDAPDLQGRIAILKVHSRNKKLARDVKLEDIAKITPGFVGADLANLLNEAAILAARRASDTIKMADLDEAVDKIGMGLGQKGKIIKPEEKKLLAYHEAGHAIMTELTPGADPVHKVTIIPRGDAGGFMMPLPEEKLVTTSRQMLAEIKVLFGGRAAEEIGLEDVSTGAYSDIKRATKVARAYVESVGMSKKLGPINFENSDDEYSFTPNKSDETVREIDLEIRKILTEEYFNTLNTLQDNWEKLEQVVELLLKKETITGDEVRRIIAGEKAEDILKGTEVKEESIQKGSEGIVQTSENSIEESQENKTVEAEVHDSNLKSDTEKLAEAVREITGETGGVLEPTEKNDFDKDSDDNEKNDDDNENSDDSSKNDSDSDDENENSDNKSEKNKKRKSNFKLPSFME</sequence>
<evidence type="ECO:0000255" key="1">
    <source>
        <dbReference type="HAMAP-Rule" id="MF_01458"/>
    </source>
</evidence>
<evidence type="ECO:0000256" key="2">
    <source>
        <dbReference type="SAM" id="MobiDB-lite"/>
    </source>
</evidence>
<gene>
    <name evidence="1" type="primary">ftsH</name>
    <name type="ordered locus">Lebu_0737</name>
</gene>
<protein>
    <recommendedName>
        <fullName evidence="1">ATP-dependent zinc metalloprotease FtsH</fullName>
        <ecNumber evidence="1">3.4.24.-</ecNumber>
    </recommendedName>
</protein>
<feature type="chain" id="PRO_0000400349" description="ATP-dependent zinc metalloprotease FtsH">
    <location>
        <begin position="1"/>
        <end position="768"/>
    </location>
</feature>
<feature type="topological domain" description="Cytoplasmic" evidence="1">
    <location>
        <begin position="1"/>
        <end position="33"/>
    </location>
</feature>
<feature type="transmembrane region" description="Helical" evidence="1">
    <location>
        <begin position="34"/>
        <end position="54"/>
    </location>
</feature>
<feature type="topological domain" description="Periplasmic" evidence="1">
    <location>
        <begin position="55"/>
        <end position="139"/>
    </location>
</feature>
<feature type="transmembrane region" description="Helical" evidence="1">
    <location>
        <begin position="140"/>
        <end position="160"/>
    </location>
</feature>
<feature type="topological domain" description="Cytoplasmic" evidence="1">
    <location>
        <begin position="161"/>
        <end position="768"/>
    </location>
</feature>
<feature type="region of interest" description="Disordered" evidence="2">
    <location>
        <begin position="647"/>
        <end position="768"/>
    </location>
</feature>
<feature type="compositionally biased region" description="Basic and acidic residues" evidence="2">
    <location>
        <begin position="669"/>
        <end position="698"/>
    </location>
</feature>
<feature type="compositionally biased region" description="Acidic residues" evidence="2">
    <location>
        <begin position="715"/>
        <end position="731"/>
    </location>
</feature>
<feature type="active site" evidence="1">
    <location>
        <position position="462"/>
    </location>
</feature>
<feature type="binding site" evidence="1">
    <location>
        <begin position="238"/>
        <end position="245"/>
    </location>
    <ligand>
        <name>ATP</name>
        <dbReference type="ChEBI" id="CHEBI:30616"/>
    </ligand>
</feature>
<feature type="binding site" evidence="1">
    <location>
        <position position="461"/>
    </location>
    <ligand>
        <name>Zn(2+)</name>
        <dbReference type="ChEBI" id="CHEBI:29105"/>
        <note>catalytic</note>
    </ligand>
</feature>
<feature type="binding site" evidence="1">
    <location>
        <position position="465"/>
    </location>
    <ligand>
        <name>Zn(2+)</name>
        <dbReference type="ChEBI" id="CHEBI:29105"/>
        <note>catalytic</note>
    </ligand>
</feature>
<feature type="binding site" evidence="1">
    <location>
        <position position="536"/>
    </location>
    <ligand>
        <name>Zn(2+)</name>
        <dbReference type="ChEBI" id="CHEBI:29105"/>
        <note>catalytic</note>
    </ligand>
</feature>
<organism>
    <name type="scientific">Leptotrichia buccalis (strain ATCC 14201 / DSM 1135 / JCM 12969 / NCTC 10249 / C-1013-b)</name>
    <dbReference type="NCBI Taxonomy" id="523794"/>
    <lineage>
        <taxon>Bacteria</taxon>
        <taxon>Fusobacteriati</taxon>
        <taxon>Fusobacteriota</taxon>
        <taxon>Fusobacteriia</taxon>
        <taxon>Fusobacteriales</taxon>
        <taxon>Leptotrichiaceae</taxon>
        <taxon>Leptotrichia</taxon>
    </lineage>
</organism>
<name>FTSH_LEPBD</name>
<accession>C7N914</accession>
<reference key="1">
    <citation type="journal article" date="2009" name="Stand. Genomic Sci.">
        <title>Complete genome sequence of Leptotrichia buccalis type strain (C-1013-b).</title>
        <authorList>
            <person name="Ivanova N."/>
            <person name="Gronow S."/>
            <person name="Lapidus A."/>
            <person name="Copeland A."/>
            <person name="Glavina Del Rio T."/>
            <person name="Nolan M."/>
            <person name="Lucas S."/>
            <person name="Chen F."/>
            <person name="Tice H."/>
            <person name="Cheng J.F."/>
            <person name="Saunders E."/>
            <person name="Bruce D."/>
            <person name="Goodwin L."/>
            <person name="Brettin T."/>
            <person name="Detter J.C."/>
            <person name="Han C."/>
            <person name="Pitluck S."/>
            <person name="Mikhailova N."/>
            <person name="Pati A."/>
            <person name="Mavrommatis K."/>
            <person name="Chen A."/>
            <person name="Palaniappan K."/>
            <person name="Land M."/>
            <person name="Hauser L."/>
            <person name="Chang Y.J."/>
            <person name="Jeffries C.D."/>
            <person name="Chain P."/>
            <person name="Rohde C."/>
            <person name="Goker M."/>
            <person name="Bristow J."/>
            <person name="Eisen J.A."/>
            <person name="Markowitz V."/>
            <person name="Hugenholtz P."/>
            <person name="Kyrpides N.C."/>
            <person name="Klenk H.P."/>
        </authorList>
    </citation>
    <scope>NUCLEOTIDE SEQUENCE [LARGE SCALE GENOMIC DNA]</scope>
    <source>
        <strain>ATCC 14201 / DSM 1135 / JCM 12969 / NCTC 10249 / C-1013-b</strain>
    </source>
</reference>
<proteinExistence type="inferred from homology"/>
<comment type="function">
    <text evidence="1">Acts as a processive, ATP-dependent zinc metallopeptidase for both cytoplasmic and membrane proteins. Plays a role in the quality control of integral membrane proteins.</text>
</comment>
<comment type="cofactor">
    <cofactor evidence="1">
        <name>Zn(2+)</name>
        <dbReference type="ChEBI" id="CHEBI:29105"/>
    </cofactor>
    <text evidence="1">Binds 1 zinc ion per subunit.</text>
</comment>
<comment type="subunit">
    <text evidence="1">Homohexamer.</text>
</comment>
<comment type="subcellular location">
    <subcellularLocation>
        <location evidence="1">Cell inner membrane</location>
        <topology evidence="1">Multi-pass membrane protein</topology>
        <orientation evidence="1">Cytoplasmic side</orientation>
    </subcellularLocation>
</comment>
<comment type="similarity">
    <text evidence="1">In the central section; belongs to the AAA ATPase family.</text>
</comment>
<comment type="similarity">
    <text evidence="1">In the C-terminal section; belongs to the peptidase M41 family.</text>
</comment>
<keyword id="KW-0067">ATP-binding</keyword>
<keyword id="KW-0997">Cell inner membrane</keyword>
<keyword id="KW-1003">Cell membrane</keyword>
<keyword id="KW-0378">Hydrolase</keyword>
<keyword id="KW-0472">Membrane</keyword>
<keyword id="KW-0479">Metal-binding</keyword>
<keyword id="KW-0482">Metalloprotease</keyword>
<keyword id="KW-0547">Nucleotide-binding</keyword>
<keyword id="KW-0645">Protease</keyword>
<keyword id="KW-0812">Transmembrane</keyword>
<keyword id="KW-1133">Transmembrane helix</keyword>
<keyword id="KW-0862">Zinc</keyword>